<reference key="1">
    <citation type="journal article" date="2010" name="Nature">
        <title>Comparative genomics reveals mobile pathogenicity chromosomes in Fusarium.</title>
        <authorList>
            <person name="Ma L.-J."/>
            <person name="van der Does H.C."/>
            <person name="Borkovich K.A."/>
            <person name="Coleman J.J."/>
            <person name="Daboussi M.-J."/>
            <person name="Di Pietro A."/>
            <person name="Dufresne M."/>
            <person name="Freitag M."/>
            <person name="Grabherr M."/>
            <person name="Henrissat B."/>
            <person name="Houterman P.M."/>
            <person name="Kang S."/>
            <person name="Shim W.-B."/>
            <person name="Woloshuk C."/>
            <person name="Xie X."/>
            <person name="Xu J.-R."/>
            <person name="Antoniw J."/>
            <person name="Baker S.E."/>
            <person name="Bluhm B.H."/>
            <person name="Breakspear A."/>
            <person name="Brown D.W."/>
            <person name="Butchko R.A.E."/>
            <person name="Chapman S."/>
            <person name="Coulson R."/>
            <person name="Coutinho P.M."/>
            <person name="Danchin E.G.J."/>
            <person name="Diener A."/>
            <person name="Gale L.R."/>
            <person name="Gardiner D.M."/>
            <person name="Goff S."/>
            <person name="Hammond-Kosack K.E."/>
            <person name="Hilburn K."/>
            <person name="Hua-Van A."/>
            <person name="Jonkers W."/>
            <person name="Kazan K."/>
            <person name="Kodira C.D."/>
            <person name="Koehrsen M."/>
            <person name="Kumar L."/>
            <person name="Lee Y.-H."/>
            <person name="Li L."/>
            <person name="Manners J.M."/>
            <person name="Miranda-Saavedra D."/>
            <person name="Mukherjee M."/>
            <person name="Park G."/>
            <person name="Park J."/>
            <person name="Park S.-Y."/>
            <person name="Proctor R.H."/>
            <person name="Regev A."/>
            <person name="Ruiz-Roldan M.C."/>
            <person name="Sain D."/>
            <person name="Sakthikumar S."/>
            <person name="Sykes S."/>
            <person name="Schwartz D.C."/>
            <person name="Turgeon B.G."/>
            <person name="Wapinski I."/>
            <person name="Yoder O."/>
            <person name="Young S."/>
            <person name="Zeng Q."/>
            <person name="Zhou S."/>
            <person name="Galagan J."/>
            <person name="Cuomo C.A."/>
            <person name="Kistler H.C."/>
            <person name="Rep M."/>
        </authorList>
    </citation>
    <scope>NUCLEOTIDE SEQUENCE [LARGE SCALE GENOMIC DNA]</scope>
    <source>
        <strain>M3125 / FGSC 7600</strain>
    </source>
</reference>
<reference key="2">
    <citation type="journal article" date="2002" name="Mol. Plant Microbe Interact.">
        <title>Fdb1 and Fdb2, Fusarium verticillioides loci necessary for detoxification of preformed antimicrobials from corn.</title>
        <authorList>
            <person name="Glenn A.E."/>
            <person name="Gold S.E."/>
            <person name="Bacon C.W."/>
        </authorList>
    </citation>
    <scope>FUNCTION</scope>
</reference>
<reference key="3">
    <citation type="journal article" date="2003" name="Appl. Environ. Microbiol.">
        <title>Identification of intermediate and branch metabolites resulting from biotransformation of 2-benzoxazolinone by Fusarium verticillioides.</title>
        <authorList>
            <person name="Glenn A.E."/>
            <person name="Meredith F.I."/>
            <person name="Morrison W.H. III"/>
            <person name="Bacon C.W."/>
        </authorList>
    </citation>
    <scope>FUNCTION</scope>
</reference>
<reference key="4">
    <citation type="journal article" date="2009" name="J. Appl. Microbiol.">
        <title>FDB2 encodes a member of the arylamine N-acetyltransferase family and is necessary for biotransformation of benzoxazolinones by Fusarium verticillioides.</title>
        <authorList>
            <person name="Glenn A.E."/>
            <person name="Bacon C.W."/>
        </authorList>
    </citation>
    <scope>FUNCTION</scope>
    <scope>DISRUPTION PHENOTYPE</scope>
</reference>
<reference key="5">
    <citation type="journal article" date="2016" name="PLoS ONE">
        <title>Two horizontally transferred xenobiotic resistance gene clusters associated with detoxification of benzoxazolinones by Fusarium species.</title>
        <authorList>
            <person name="Glenn A.E."/>
            <person name="Davis C.B."/>
            <person name="Gao M."/>
            <person name="Gold S.E."/>
            <person name="Mitchell T.R."/>
            <person name="Proctor R.H."/>
            <person name="Stewart J.E."/>
            <person name="Snook M.E."/>
        </authorList>
    </citation>
    <scope>FUNCTION</scope>
    <scope>INDUCTION</scope>
</reference>
<comment type="function">
    <text evidence="2 3 4 5 8">Aldo-keto reductase; part of the Fusarium detoxification of benzoxazolinone cluster 2 (FDB2) involved in the degradation of benzoxazolinones produced by the host plant (PubMed:19302487, PubMed:26808652). Maize, wheat, and rye produce the 2 benzoxazinone phytoanticipins 2,4-dihy-droxy-7-methoxy-1,4-benzoxazin-3-one (DIMBOA) and 2,4-dihydroxy-1,4-benzoxazin-3-one (DIBOA) that, due to their inherent instability once released, spontaneously degrade to the more stable corresponding benzoxazolinones, 6-methoxy-2-benzoxazolinone (MBOA) and 2-benzoxazolinone (BOA), respectively (PubMed:11876429). The first step in the detoxification of benzoxazolinones involves the hydrolysis of the cyclic ester bond of benzoxazolinones by the FDB1 cluster gamma-lactamase MBL1 to aminophenols (PubMed:12788712, PubMed:26808652). MBL1 is able to convert BOA into 2-aminophenol (2-AP), as well as MBOA into 5-methoxy-2-aminophenol (2-AMP) (PubMed:12788712, PubMed:26808652). The FDB2 cluster N-malonyltransferase FDB2/NAT1 then metabolizes aminophenols via N-malonylation to non-toxic malonamic acids (PubMed:12788712, PubMed:19302487). FDB2/NAT1 converts 2-AP into N-(2-hydroxyphenyl) malonamic acid (HPMA) and 2-AMP into N-(2-hydroxy-4-methoxyphenyl) malonamic acid (HMPMA) (PubMed:12788712, PubMed:19302487). The duplicated dienlactone hydrolases DLH1 and DLH2 may provide redundant function for hydrolyzing the lactone moiety in the BOA molecule (Probable). The roles of the amidases an other enzymes encoded by the 2 FDB clusters have not been identified so far (Probable).</text>
</comment>
<comment type="induction">
    <text evidence="5">Expression is induced in response to 2-benzoxasolinone (BOA) exposure.</text>
</comment>
<comment type="disruption phenotype">
    <text evidence="4">Does not affect tolerance to 2-benzoxazolinone (BOA).</text>
</comment>
<comment type="miscellaneous">
    <text evidence="8">Fusarium verticillioides possesses 2 unlinked loci, FDB1 and FDB2, necessary for detoxification of antimicrobial compounds produced by maize, including 2-benzoxazolinone (BOA) (Probable). The FDB2 cluster arose as a duplication of the FDB1 cluster with rearrangement and expansion by incorporating additional genes (Probable).</text>
</comment>
<comment type="similarity">
    <text evidence="7">Belongs to the aldo/keto reductase family. Aldo/keto reductase 2 subfamily.</text>
</comment>
<protein>
    <recommendedName>
        <fullName evidence="6">Aldo-keto reductase FVEG_12638</fullName>
        <ecNumber evidence="8">1.1.1.-</ecNumber>
    </recommendedName>
    <alternativeName>
        <fullName evidence="6">Fusarium detoxification of benzoxazolinone cluster 2 protein FVEG_12638</fullName>
        <shortName evidence="6">FDB2 cluster protein FVEG_12638</shortName>
    </alternativeName>
</protein>
<sequence>MVKSMRFRDLEVPTPGFGAMGISFALGNDLSYEEAEPVLLKALEQGCTFWDTAVSYGPGKNEKILGDFIRKYNCRDKLFIASKCGIAAFEDGSVTNSAEHIKTYIEGTIERLGFTPDLYYIHRMDPNTPLEESIPALDSLRKQGKTKYIGLSECSAETLRKANSIARIDAVQAEYSAFETIHETDGLIDTARELDIEFIAYGPLGHGWLVEDFPYQTPEDFAPEDYRRQIPKWQGENFYANKRIADGFRELAKRKKCTLPQVALAWVAAQGLISIPGTTKPERLVENFTSRDIELTEEEIKDMRKLVDVLKPQGDRYNEVAMRSIGK</sequence>
<dbReference type="EC" id="1.1.1.-" evidence="8"/>
<dbReference type="EMBL" id="CM000580">
    <property type="protein sequence ID" value="EWG54420.1"/>
    <property type="molecule type" value="Genomic_DNA"/>
</dbReference>
<dbReference type="RefSeq" id="XP_018760611.1">
    <property type="nucleotide sequence ID" value="XM_018901988.1"/>
</dbReference>
<dbReference type="SMR" id="W7N2Q9"/>
<dbReference type="EnsemblFungi" id="FVEG_12638T0">
    <property type="protein sequence ID" value="FVEG_12638T0"/>
    <property type="gene ID" value="FVEG_12638"/>
</dbReference>
<dbReference type="GeneID" id="30070066"/>
<dbReference type="KEGG" id="fvr:FVEG_12638"/>
<dbReference type="VEuPathDB" id="FungiDB:FVEG_12638"/>
<dbReference type="eggNOG" id="KOG1575">
    <property type="taxonomic scope" value="Eukaryota"/>
</dbReference>
<dbReference type="HOGENOM" id="CLU_023205_2_1_1"/>
<dbReference type="OMA" id="LEQGCTF"/>
<dbReference type="OrthoDB" id="45134at110618"/>
<dbReference type="Proteomes" id="UP000009096">
    <property type="component" value="Chromosome 3"/>
</dbReference>
<dbReference type="GO" id="GO:0005737">
    <property type="term" value="C:cytoplasm"/>
    <property type="evidence" value="ECO:0007669"/>
    <property type="project" value="TreeGrafter"/>
</dbReference>
<dbReference type="GO" id="GO:0004033">
    <property type="term" value="F:aldo-keto reductase (NADPH) activity"/>
    <property type="evidence" value="ECO:0007669"/>
    <property type="project" value="TreeGrafter"/>
</dbReference>
<dbReference type="Gene3D" id="3.20.20.100">
    <property type="entry name" value="NADP-dependent oxidoreductase domain"/>
    <property type="match status" value="1"/>
</dbReference>
<dbReference type="InterPro" id="IPR050791">
    <property type="entry name" value="Aldo-Keto_reductase"/>
</dbReference>
<dbReference type="InterPro" id="IPR023210">
    <property type="entry name" value="NADP_OxRdtase_dom"/>
</dbReference>
<dbReference type="InterPro" id="IPR036812">
    <property type="entry name" value="NADP_OxRdtase_dom_sf"/>
</dbReference>
<dbReference type="PANTHER" id="PTHR43625">
    <property type="entry name" value="AFLATOXIN B1 ALDEHYDE REDUCTASE"/>
    <property type="match status" value="1"/>
</dbReference>
<dbReference type="PANTHER" id="PTHR43625:SF7">
    <property type="entry name" value="REDUCTASE (YAKC), PUTATIVE (AFU_ORTHOLOGUE AFUA_8G01560)-RELATED"/>
    <property type="match status" value="1"/>
</dbReference>
<dbReference type="Pfam" id="PF00248">
    <property type="entry name" value="Aldo_ket_red"/>
    <property type="match status" value="1"/>
</dbReference>
<dbReference type="SUPFAM" id="SSF51430">
    <property type="entry name" value="NAD(P)-linked oxidoreductase"/>
    <property type="match status" value="1"/>
</dbReference>
<evidence type="ECO:0000250" key="1">
    <source>
        <dbReference type="UniProtKB" id="Q8CG76"/>
    </source>
</evidence>
<evidence type="ECO:0000269" key="2">
    <source>
    </source>
</evidence>
<evidence type="ECO:0000269" key="3">
    <source>
    </source>
</evidence>
<evidence type="ECO:0000269" key="4">
    <source>
    </source>
</evidence>
<evidence type="ECO:0000269" key="5">
    <source>
    </source>
</evidence>
<evidence type="ECO:0000303" key="6">
    <source>
    </source>
</evidence>
<evidence type="ECO:0000305" key="7"/>
<evidence type="ECO:0000305" key="8">
    <source>
    </source>
</evidence>
<gene>
    <name type="ORF">FVEG_12638</name>
</gene>
<proteinExistence type="evidence at transcript level"/>
<accession>W7N2Q9</accession>
<feature type="chain" id="PRO_0000454615" description="Aldo-keto reductase FVEG_12638">
    <location>
        <begin position="1"/>
        <end position="327"/>
    </location>
</feature>
<feature type="active site" description="Proton donor" evidence="1">
    <location>
        <position position="56"/>
    </location>
</feature>
<feature type="binding site" evidence="1">
    <location>
        <position position="51"/>
    </location>
    <ligand>
        <name>NADP(+)</name>
        <dbReference type="ChEBI" id="CHEBI:58349"/>
    </ligand>
</feature>
<feature type="binding site" evidence="1">
    <location>
        <position position="122"/>
    </location>
    <ligand>
        <name>substrate</name>
    </ligand>
</feature>
<feature type="binding site" evidence="1">
    <location>
        <begin position="152"/>
        <end position="153"/>
    </location>
    <ligand>
        <name>NADP(+)</name>
        <dbReference type="ChEBI" id="CHEBI:58349"/>
    </ligand>
</feature>
<feature type="binding site" evidence="1">
    <location>
        <begin position="202"/>
        <end position="212"/>
    </location>
    <ligand>
        <name>NADP(+)</name>
        <dbReference type="ChEBI" id="CHEBI:58349"/>
    </ligand>
</feature>
<feature type="binding site" evidence="1">
    <location>
        <begin position="286"/>
        <end position="294"/>
    </location>
    <ligand>
        <name>NADP(+)</name>
        <dbReference type="ChEBI" id="CHEBI:58349"/>
    </ligand>
</feature>
<organism>
    <name type="scientific">Gibberella moniliformis (strain M3125 / FGSC 7600)</name>
    <name type="common">Maize ear and stalk rot fungus</name>
    <name type="synonym">Fusarium verticillioides</name>
    <dbReference type="NCBI Taxonomy" id="334819"/>
    <lineage>
        <taxon>Eukaryota</taxon>
        <taxon>Fungi</taxon>
        <taxon>Dikarya</taxon>
        <taxon>Ascomycota</taxon>
        <taxon>Pezizomycotina</taxon>
        <taxon>Sordariomycetes</taxon>
        <taxon>Hypocreomycetidae</taxon>
        <taxon>Hypocreales</taxon>
        <taxon>Nectriaceae</taxon>
        <taxon>Fusarium</taxon>
        <taxon>Fusarium fujikuroi species complex</taxon>
    </lineage>
</organism>
<keyword id="KW-0521">NADP</keyword>
<keyword id="KW-0560">Oxidoreductase</keyword>
<keyword id="KW-1185">Reference proteome</keyword>
<name>FDB38_GIBM7</name>